<feature type="chain" id="PRO_1000082093" description="Succinate--CoA ligase [ADP-forming] subunit beta">
    <location>
        <begin position="1"/>
        <end position="387"/>
    </location>
</feature>
<feature type="domain" description="ATP-grasp" evidence="1">
    <location>
        <begin position="9"/>
        <end position="245"/>
    </location>
</feature>
<feature type="binding site" evidence="1">
    <location>
        <position position="46"/>
    </location>
    <ligand>
        <name>ATP</name>
        <dbReference type="ChEBI" id="CHEBI:30616"/>
    </ligand>
</feature>
<feature type="binding site" evidence="1">
    <location>
        <begin position="53"/>
        <end position="55"/>
    </location>
    <ligand>
        <name>ATP</name>
        <dbReference type="ChEBI" id="CHEBI:30616"/>
    </ligand>
</feature>
<feature type="binding site" evidence="1">
    <location>
        <position position="100"/>
    </location>
    <ligand>
        <name>ATP</name>
        <dbReference type="ChEBI" id="CHEBI:30616"/>
    </ligand>
</feature>
<feature type="binding site" evidence="1">
    <location>
        <position position="103"/>
    </location>
    <ligand>
        <name>ATP</name>
        <dbReference type="ChEBI" id="CHEBI:30616"/>
    </ligand>
</feature>
<feature type="binding site" evidence="1">
    <location>
        <position position="108"/>
    </location>
    <ligand>
        <name>ATP</name>
        <dbReference type="ChEBI" id="CHEBI:30616"/>
    </ligand>
</feature>
<feature type="binding site" evidence="1">
    <location>
        <position position="200"/>
    </location>
    <ligand>
        <name>Mg(2+)</name>
        <dbReference type="ChEBI" id="CHEBI:18420"/>
    </ligand>
</feature>
<feature type="binding site" evidence="1">
    <location>
        <position position="214"/>
    </location>
    <ligand>
        <name>Mg(2+)</name>
        <dbReference type="ChEBI" id="CHEBI:18420"/>
    </ligand>
</feature>
<feature type="binding site" evidence="1">
    <location>
        <position position="265"/>
    </location>
    <ligand>
        <name>substrate</name>
        <note>ligand shared with subunit alpha</note>
    </ligand>
</feature>
<feature type="binding site" evidence="1">
    <location>
        <begin position="322"/>
        <end position="324"/>
    </location>
    <ligand>
        <name>substrate</name>
        <note>ligand shared with subunit alpha</note>
    </ligand>
</feature>
<feature type="helix" evidence="3">
    <location>
        <begin position="5"/>
        <end position="14"/>
    </location>
</feature>
<feature type="strand" evidence="3">
    <location>
        <begin position="22"/>
        <end position="27"/>
    </location>
</feature>
<feature type="helix" evidence="3">
    <location>
        <begin position="28"/>
        <end position="38"/>
    </location>
</feature>
<feature type="strand" evidence="3">
    <location>
        <begin position="43"/>
        <end position="47"/>
    </location>
</feature>
<feature type="strand" evidence="3">
    <location>
        <begin position="50"/>
        <end position="52"/>
    </location>
</feature>
<feature type="turn" evidence="3">
    <location>
        <begin position="54"/>
        <end position="58"/>
    </location>
</feature>
<feature type="strand" evidence="3">
    <location>
        <begin position="60"/>
        <end position="63"/>
    </location>
</feature>
<feature type="helix" evidence="3">
    <location>
        <begin position="66"/>
        <end position="76"/>
    </location>
</feature>
<feature type="strand" evidence="2">
    <location>
        <begin position="79"/>
        <end position="81"/>
    </location>
</feature>
<feature type="strand" evidence="3">
    <location>
        <begin position="96"/>
        <end position="100"/>
    </location>
</feature>
<feature type="strand" evidence="3">
    <location>
        <begin position="105"/>
        <end position="116"/>
    </location>
</feature>
<feature type="turn" evidence="3">
    <location>
        <begin position="117"/>
        <end position="120"/>
    </location>
</feature>
<feature type="strand" evidence="3">
    <location>
        <begin position="121"/>
        <end position="128"/>
    </location>
</feature>
<feature type="helix" evidence="3">
    <location>
        <begin position="134"/>
        <end position="140"/>
    </location>
</feature>
<feature type="helix" evidence="3">
    <location>
        <begin position="142"/>
        <end position="144"/>
    </location>
</feature>
<feature type="strand" evidence="3">
    <location>
        <begin position="146"/>
        <end position="149"/>
    </location>
</feature>
<feature type="turn" evidence="3">
    <location>
        <begin position="152"/>
        <end position="154"/>
    </location>
</feature>
<feature type="helix" evidence="3">
    <location>
        <begin position="158"/>
        <end position="167"/>
    </location>
</feature>
<feature type="helix" evidence="3">
    <location>
        <begin position="173"/>
        <end position="191"/>
    </location>
</feature>
<feature type="strand" evidence="3">
    <location>
        <begin position="194"/>
        <end position="205"/>
    </location>
</feature>
<feature type="strand" evidence="3">
    <location>
        <begin position="210"/>
        <end position="212"/>
    </location>
</feature>
<feature type="strand" evidence="3">
    <location>
        <begin position="214"/>
        <end position="219"/>
    </location>
</feature>
<feature type="helix" evidence="3">
    <location>
        <begin position="221"/>
        <end position="226"/>
    </location>
</feature>
<feature type="helix" evidence="3">
    <location>
        <begin position="228"/>
        <end position="231"/>
    </location>
</feature>
<feature type="helix" evidence="3">
    <location>
        <begin position="236"/>
        <end position="238"/>
    </location>
</feature>
<feature type="helix" evidence="3">
    <location>
        <begin position="241"/>
        <end position="248"/>
    </location>
</feature>
<feature type="strand" evidence="3">
    <location>
        <begin position="252"/>
        <end position="255"/>
    </location>
</feature>
<feature type="strand" evidence="3">
    <location>
        <begin position="257"/>
        <end position="266"/>
    </location>
</feature>
<feature type="helix" evidence="3">
    <location>
        <begin position="267"/>
        <end position="278"/>
    </location>
</feature>
<feature type="turn" evidence="3">
    <location>
        <begin position="279"/>
        <end position="281"/>
    </location>
</feature>
<feature type="strand" evidence="3">
    <location>
        <begin position="286"/>
        <end position="289"/>
    </location>
</feature>
<feature type="helix" evidence="3">
    <location>
        <begin position="298"/>
        <end position="308"/>
    </location>
</feature>
<feature type="strand" evidence="3">
    <location>
        <begin position="315"/>
        <end position="318"/>
    </location>
</feature>
<feature type="strand" evidence="3">
    <location>
        <begin position="322"/>
        <end position="324"/>
    </location>
</feature>
<feature type="helix" evidence="2">
    <location>
        <begin position="326"/>
        <end position="337"/>
    </location>
</feature>
<feature type="strand" evidence="3">
    <location>
        <begin position="346"/>
        <end position="349"/>
    </location>
</feature>
<feature type="helix" evidence="2">
    <location>
        <begin position="355"/>
        <end position="363"/>
    </location>
</feature>
<feature type="strand" evidence="2">
    <location>
        <begin position="365"/>
        <end position="367"/>
    </location>
</feature>
<feature type="strand" evidence="3">
    <location>
        <begin position="370"/>
        <end position="374"/>
    </location>
</feature>
<feature type="helix" evidence="3">
    <location>
        <begin position="375"/>
        <end position="384"/>
    </location>
</feature>
<accession>Q5NHF3</accession>
<organism>
    <name type="scientific">Francisella tularensis subsp. tularensis (strain SCHU S4 / Schu 4)</name>
    <dbReference type="NCBI Taxonomy" id="177416"/>
    <lineage>
        <taxon>Bacteria</taxon>
        <taxon>Pseudomonadati</taxon>
        <taxon>Pseudomonadota</taxon>
        <taxon>Gammaproteobacteria</taxon>
        <taxon>Thiotrichales</taxon>
        <taxon>Francisellaceae</taxon>
        <taxon>Francisella</taxon>
    </lineage>
</organism>
<dbReference type="EC" id="6.2.1.5" evidence="1"/>
<dbReference type="EMBL" id="AJ749949">
    <property type="protein sequence ID" value="CAG45137.1"/>
    <property type="molecule type" value="Genomic_DNA"/>
</dbReference>
<dbReference type="RefSeq" id="WP_003020338.1">
    <property type="nucleotide sequence ID" value="NC_006570.2"/>
</dbReference>
<dbReference type="RefSeq" id="YP_169539.1">
    <property type="nucleotide sequence ID" value="NC_006570.2"/>
</dbReference>
<dbReference type="PDB" id="6MGG">
    <property type="method" value="X-ray"/>
    <property type="resolution" value="1.78 A"/>
    <property type="chains" value="B/D=1-387"/>
</dbReference>
<dbReference type="PDB" id="6PFN">
    <property type="method" value="X-ray"/>
    <property type="resolution" value="1.76 A"/>
    <property type="chains" value="B/D=1-387"/>
</dbReference>
<dbReference type="PDBsum" id="6MGG"/>
<dbReference type="PDBsum" id="6PFN"/>
<dbReference type="SMR" id="Q5NHF3"/>
<dbReference type="STRING" id="177416.FTT_0504c"/>
<dbReference type="EnsemblBacteria" id="CAG45137">
    <property type="protein sequence ID" value="CAG45137"/>
    <property type="gene ID" value="FTT_0504c"/>
</dbReference>
<dbReference type="KEGG" id="ftu:FTT_0504c"/>
<dbReference type="eggNOG" id="COG0045">
    <property type="taxonomic scope" value="Bacteria"/>
</dbReference>
<dbReference type="OrthoDB" id="9802602at2"/>
<dbReference type="UniPathway" id="UPA00223">
    <property type="reaction ID" value="UER00999"/>
</dbReference>
<dbReference type="Proteomes" id="UP000001174">
    <property type="component" value="Chromosome"/>
</dbReference>
<dbReference type="GO" id="GO:0005829">
    <property type="term" value="C:cytosol"/>
    <property type="evidence" value="ECO:0007669"/>
    <property type="project" value="TreeGrafter"/>
</dbReference>
<dbReference type="GO" id="GO:0042709">
    <property type="term" value="C:succinate-CoA ligase complex"/>
    <property type="evidence" value="ECO:0007669"/>
    <property type="project" value="TreeGrafter"/>
</dbReference>
<dbReference type="GO" id="GO:0005524">
    <property type="term" value="F:ATP binding"/>
    <property type="evidence" value="ECO:0007669"/>
    <property type="project" value="UniProtKB-UniRule"/>
</dbReference>
<dbReference type="GO" id="GO:0000287">
    <property type="term" value="F:magnesium ion binding"/>
    <property type="evidence" value="ECO:0007669"/>
    <property type="project" value="UniProtKB-UniRule"/>
</dbReference>
<dbReference type="GO" id="GO:0004775">
    <property type="term" value="F:succinate-CoA ligase (ADP-forming) activity"/>
    <property type="evidence" value="ECO:0007669"/>
    <property type="project" value="UniProtKB-UniRule"/>
</dbReference>
<dbReference type="GO" id="GO:0004776">
    <property type="term" value="F:succinate-CoA ligase (GDP-forming) activity"/>
    <property type="evidence" value="ECO:0007669"/>
    <property type="project" value="RHEA"/>
</dbReference>
<dbReference type="GO" id="GO:0006104">
    <property type="term" value="P:succinyl-CoA metabolic process"/>
    <property type="evidence" value="ECO:0007669"/>
    <property type="project" value="TreeGrafter"/>
</dbReference>
<dbReference type="GO" id="GO:0006099">
    <property type="term" value="P:tricarboxylic acid cycle"/>
    <property type="evidence" value="ECO:0007669"/>
    <property type="project" value="UniProtKB-UniRule"/>
</dbReference>
<dbReference type="FunFam" id="3.30.1490.20:FF:000002">
    <property type="entry name" value="Succinate--CoA ligase [ADP-forming] subunit beta"/>
    <property type="match status" value="1"/>
</dbReference>
<dbReference type="FunFam" id="3.30.470.20:FF:000002">
    <property type="entry name" value="Succinate--CoA ligase [ADP-forming] subunit beta"/>
    <property type="match status" value="1"/>
</dbReference>
<dbReference type="FunFam" id="3.40.50.261:FF:000001">
    <property type="entry name" value="Succinate--CoA ligase [ADP-forming] subunit beta"/>
    <property type="match status" value="1"/>
</dbReference>
<dbReference type="Gene3D" id="3.30.1490.20">
    <property type="entry name" value="ATP-grasp fold, A domain"/>
    <property type="match status" value="1"/>
</dbReference>
<dbReference type="Gene3D" id="3.30.470.20">
    <property type="entry name" value="ATP-grasp fold, B domain"/>
    <property type="match status" value="1"/>
</dbReference>
<dbReference type="Gene3D" id="3.40.50.261">
    <property type="entry name" value="Succinyl-CoA synthetase domains"/>
    <property type="match status" value="1"/>
</dbReference>
<dbReference type="HAMAP" id="MF_00558">
    <property type="entry name" value="Succ_CoA_beta"/>
    <property type="match status" value="1"/>
</dbReference>
<dbReference type="InterPro" id="IPR011761">
    <property type="entry name" value="ATP-grasp"/>
</dbReference>
<dbReference type="InterPro" id="IPR013650">
    <property type="entry name" value="ATP-grasp_succ-CoA_synth-type"/>
</dbReference>
<dbReference type="InterPro" id="IPR013815">
    <property type="entry name" value="ATP_grasp_subdomain_1"/>
</dbReference>
<dbReference type="InterPro" id="IPR017866">
    <property type="entry name" value="Succ-CoA_synthase_bsu_CS"/>
</dbReference>
<dbReference type="InterPro" id="IPR005811">
    <property type="entry name" value="SUCC_ACL_C"/>
</dbReference>
<dbReference type="InterPro" id="IPR005809">
    <property type="entry name" value="Succ_CoA_ligase-like_bsu"/>
</dbReference>
<dbReference type="InterPro" id="IPR016102">
    <property type="entry name" value="Succinyl-CoA_synth-like"/>
</dbReference>
<dbReference type="NCBIfam" id="NF001913">
    <property type="entry name" value="PRK00696.1"/>
    <property type="match status" value="1"/>
</dbReference>
<dbReference type="NCBIfam" id="TIGR01016">
    <property type="entry name" value="sucCoAbeta"/>
    <property type="match status" value="1"/>
</dbReference>
<dbReference type="PANTHER" id="PTHR11815:SF10">
    <property type="entry name" value="SUCCINATE--COA LIGASE [GDP-FORMING] SUBUNIT BETA, MITOCHONDRIAL"/>
    <property type="match status" value="1"/>
</dbReference>
<dbReference type="PANTHER" id="PTHR11815">
    <property type="entry name" value="SUCCINYL-COA SYNTHETASE BETA CHAIN"/>
    <property type="match status" value="1"/>
</dbReference>
<dbReference type="Pfam" id="PF08442">
    <property type="entry name" value="ATP-grasp_2"/>
    <property type="match status" value="1"/>
</dbReference>
<dbReference type="Pfam" id="PF00549">
    <property type="entry name" value="Ligase_CoA"/>
    <property type="match status" value="1"/>
</dbReference>
<dbReference type="PIRSF" id="PIRSF001554">
    <property type="entry name" value="SucCS_beta"/>
    <property type="match status" value="1"/>
</dbReference>
<dbReference type="SUPFAM" id="SSF56059">
    <property type="entry name" value="Glutathione synthetase ATP-binding domain-like"/>
    <property type="match status" value="1"/>
</dbReference>
<dbReference type="SUPFAM" id="SSF52210">
    <property type="entry name" value="Succinyl-CoA synthetase domains"/>
    <property type="match status" value="1"/>
</dbReference>
<dbReference type="PROSITE" id="PS50975">
    <property type="entry name" value="ATP_GRASP"/>
    <property type="match status" value="1"/>
</dbReference>
<dbReference type="PROSITE" id="PS01217">
    <property type="entry name" value="SUCCINYL_COA_LIG_3"/>
    <property type="match status" value="1"/>
</dbReference>
<sequence>MNLHEYQAKDLLESYGLKVQKGIVAHNPNEAAQAFDQLGGKFAVVKAQVHAGGRGKAGGVKVVKSSQEAREVAESLIGKNLVTFQTDAEGQPVNSVGVFEDVYPVTRELYLGAVVDRSSRKVTFMASTEGGVDIEEVAHNSPEKILKVEVDPLVGLQPFQAREVAFKLGLEGKQINDFVKTMLGAYKAFIECDFALFEINPLAVRENGEIVCVDGKINLDSNALYRHPKLLALRDKSQENAKELKASEHELNYVALEGNIGCMVNGAGLAMATMDIIQLYGGKPANFLDVGGGATKERVIEAFKLILDDENVKAILINIFGGIVRCDMIAEAIIEAVKEVNVTVPVVVRLEGNNAEKGAKILADSGLKLIPADGLADAADKVVKSLG</sequence>
<keyword id="KW-0002">3D-structure</keyword>
<keyword id="KW-0067">ATP-binding</keyword>
<keyword id="KW-0436">Ligase</keyword>
<keyword id="KW-0460">Magnesium</keyword>
<keyword id="KW-0479">Metal-binding</keyword>
<keyword id="KW-0547">Nucleotide-binding</keyword>
<keyword id="KW-1185">Reference proteome</keyword>
<keyword id="KW-0816">Tricarboxylic acid cycle</keyword>
<gene>
    <name evidence="1" type="primary">sucC</name>
    <name type="ordered locus">FTT_0504c</name>
</gene>
<reference key="1">
    <citation type="journal article" date="2005" name="Nat. Genet.">
        <title>The complete genome sequence of Francisella tularensis, the causative agent of tularemia.</title>
        <authorList>
            <person name="Larsson P."/>
            <person name="Oyston P.C.F."/>
            <person name="Chain P."/>
            <person name="Chu M.C."/>
            <person name="Duffield M."/>
            <person name="Fuxelius H.-H."/>
            <person name="Garcia E."/>
            <person name="Haelltorp G."/>
            <person name="Johansson D."/>
            <person name="Isherwood K.E."/>
            <person name="Karp P.D."/>
            <person name="Larsson E."/>
            <person name="Liu Y."/>
            <person name="Michell S."/>
            <person name="Prior J."/>
            <person name="Prior R."/>
            <person name="Malfatti S."/>
            <person name="Sjoestedt A."/>
            <person name="Svensson K."/>
            <person name="Thompson N."/>
            <person name="Vergez L."/>
            <person name="Wagg J.K."/>
            <person name="Wren B.W."/>
            <person name="Lindler L.E."/>
            <person name="Andersson S.G.E."/>
            <person name="Forsman M."/>
            <person name="Titball R.W."/>
        </authorList>
    </citation>
    <scope>NUCLEOTIDE SEQUENCE [LARGE SCALE GENOMIC DNA]</scope>
    <source>
        <strain>SCHU S4 / Schu 4</strain>
    </source>
</reference>
<name>SUCC_FRATT</name>
<protein>
    <recommendedName>
        <fullName evidence="1">Succinate--CoA ligase [ADP-forming] subunit beta</fullName>
        <ecNumber evidence="1">6.2.1.5</ecNumber>
    </recommendedName>
    <alternativeName>
        <fullName evidence="1">Succinyl-CoA synthetase subunit beta</fullName>
        <shortName evidence="1">SCS-beta</shortName>
    </alternativeName>
</protein>
<comment type="function">
    <text evidence="1">Succinyl-CoA synthetase functions in the citric acid cycle (TCA), coupling the hydrolysis of succinyl-CoA to the synthesis of either ATP or GTP and thus represents the only step of substrate-level phosphorylation in the TCA. The beta subunit provides nucleotide specificity of the enzyme and binds the substrate succinate, while the binding sites for coenzyme A and phosphate are found in the alpha subunit.</text>
</comment>
<comment type="catalytic activity">
    <reaction evidence="1">
        <text>succinate + ATP + CoA = succinyl-CoA + ADP + phosphate</text>
        <dbReference type="Rhea" id="RHEA:17661"/>
        <dbReference type="ChEBI" id="CHEBI:30031"/>
        <dbReference type="ChEBI" id="CHEBI:30616"/>
        <dbReference type="ChEBI" id="CHEBI:43474"/>
        <dbReference type="ChEBI" id="CHEBI:57287"/>
        <dbReference type="ChEBI" id="CHEBI:57292"/>
        <dbReference type="ChEBI" id="CHEBI:456216"/>
        <dbReference type="EC" id="6.2.1.5"/>
    </reaction>
    <physiologicalReaction direction="right-to-left" evidence="1">
        <dbReference type="Rhea" id="RHEA:17663"/>
    </physiologicalReaction>
</comment>
<comment type="catalytic activity">
    <reaction evidence="1">
        <text>GTP + succinate + CoA = succinyl-CoA + GDP + phosphate</text>
        <dbReference type="Rhea" id="RHEA:22120"/>
        <dbReference type="ChEBI" id="CHEBI:30031"/>
        <dbReference type="ChEBI" id="CHEBI:37565"/>
        <dbReference type="ChEBI" id="CHEBI:43474"/>
        <dbReference type="ChEBI" id="CHEBI:57287"/>
        <dbReference type="ChEBI" id="CHEBI:57292"/>
        <dbReference type="ChEBI" id="CHEBI:58189"/>
    </reaction>
    <physiologicalReaction direction="right-to-left" evidence="1">
        <dbReference type="Rhea" id="RHEA:22122"/>
    </physiologicalReaction>
</comment>
<comment type="cofactor">
    <cofactor evidence="1">
        <name>Mg(2+)</name>
        <dbReference type="ChEBI" id="CHEBI:18420"/>
    </cofactor>
    <text evidence="1">Binds 1 Mg(2+) ion per subunit.</text>
</comment>
<comment type="pathway">
    <text evidence="1">Carbohydrate metabolism; tricarboxylic acid cycle; succinate from succinyl-CoA (ligase route): step 1/1.</text>
</comment>
<comment type="subunit">
    <text evidence="1">Heterotetramer of two alpha and two beta subunits.</text>
</comment>
<comment type="similarity">
    <text evidence="1">Belongs to the succinate/malate CoA ligase beta subunit family.</text>
</comment>
<evidence type="ECO:0000255" key="1">
    <source>
        <dbReference type="HAMAP-Rule" id="MF_00558"/>
    </source>
</evidence>
<evidence type="ECO:0007829" key="2">
    <source>
        <dbReference type="PDB" id="6MGG"/>
    </source>
</evidence>
<evidence type="ECO:0007829" key="3">
    <source>
        <dbReference type="PDB" id="6PFN"/>
    </source>
</evidence>
<proteinExistence type="evidence at protein level"/>